<comment type="function">
    <text evidence="3">Efflux pump that may be involved in the secretion of agnestins, dihydroxy-xanthone metabolites.</text>
</comment>
<comment type="subcellular location">
    <subcellularLocation>
        <location evidence="5">Cell membrane</location>
        <topology evidence="1">Multi-pass membrane protein</topology>
    </subcellularLocation>
</comment>
<comment type="similarity">
    <text evidence="5">Belongs to the major facilitator superfamily. Monocarboxylate porter (TC 2.A.1.13) family.</text>
</comment>
<proteinExistence type="inferred from homology"/>
<organism>
    <name type="scientific">Paecilomyces divaricatus</name>
    <name type="common">Penicillium divaricatum</name>
    <dbReference type="NCBI Taxonomy" id="644132"/>
    <lineage>
        <taxon>Eukaryota</taxon>
        <taxon>Fungi</taxon>
        <taxon>Dikarya</taxon>
        <taxon>Ascomycota</taxon>
        <taxon>Pezizomycotina</taxon>
        <taxon>Eurotiomycetes</taxon>
        <taxon>Eurotiomycetidae</taxon>
        <taxon>Eurotiales</taxon>
        <taxon>Thermoascaceae</taxon>
        <taxon>Paecilomyces</taxon>
    </lineage>
</organism>
<evidence type="ECO:0000255" key="1"/>
<evidence type="ECO:0000256" key="2">
    <source>
        <dbReference type="SAM" id="MobiDB-lite"/>
    </source>
</evidence>
<evidence type="ECO:0000269" key="3">
    <source>
    </source>
</evidence>
<evidence type="ECO:0000303" key="4">
    <source>
    </source>
</evidence>
<evidence type="ECO:0000305" key="5"/>
<protein>
    <recommendedName>
        <fullName evidence="4">Agnestins efflux protein AgnL12</fullName>
    </recommendedName>
    <alternativeName>
        <fullName evidence="4">Agnestins biosynthesis cluster protein L12</fullName>
    </alternativeName>
</protein>
<reference key="1">
    <citation type="journal article" date="2019" name="Chem. Sci.">
        <title>Characterisation of the biosynthetic pathway to agnestins A and B reveals the reductive route to chrysophanol in fungi.</title>
        <authorList>
            <person name="Szwalbe A.J."/>
            <person name="Williams K."/>
            <person name="Song Z."/>
            <person name="de Mattos-Shipley K."/>
            <person name="Vincent J.L."/>
            <person name="Bailey A.M."/>
            <person name="Willis C.L."/>
            <person name="Cox R.J."/>
            <person name="Simpson T.J."/>
        </authorList>
    </citation>
    <scope>NUCLEOTIDE SEQUENCE [GENOMIC DNA]</scope>
    <scope>FUNCTION</scope>
    <source>
        <strain>K5013</strain>
    </source>
</reference>
<feature type="chain" id="PRO_0000449024" description="Agnestins efflux protein AgnL12">
    <location>
        <begin position="1"/>
        <end position="433"/>
    </location>
</feature>
<feature type="transmembrane region" description="Helical" evidence="1">
    <location>
        <begin position="47"/>
        <end position="67"/>
    </location>
</feature>
<feature type="transmembrane region" description="Helical" evidence="1">
    <location>
        <begin position="87"/>
        <end position="107"/>
    </location>
</feature>
<feature type="transmembrane region" description="Helical" evidence="1">
    <location>
        <begin position="116"/>
        <end position="136"/>
    </location>
</feature>
<feature type="transmembrane region" description="Helical" evidence="1">
    <location>
        <begin position="141"/>
        <end position="161"/>
    </location>
</feature>
<feature type="transmembrane region" description="Helical" evidence="1">
    <location>
        <begin position="174"/>
        <end position="194"/>
    </location>
</feature>
<feature type="transmembrane region" description="Helical" evidence="1">
    <location>
        <begin position="205"/>
        <end position="225"/>
    </location>
</feature>
<feature type="transmembrane region" description="Helical" evidence="1">
    <location>
        <begin position="248"/>
        <end position="268"/>
    </location>
</feature>
<feature type="transmembrane region" description="Helical" evidence="1">
    <location>
        <begin position="285"/>
        <end position="305"/>
    </location>
</feature>
<feature type="transmembrane region" description="Helical" evidence="1">
    <location>
        <begin position="309"/>
        <end position="329"/>
    </location>
</feature>
<feature type="transmembrane region" description="Helical" evidence="1">
    <location>
        <begin position="335"/>
        <end position="355"/>
    </location>
</feature>
<feature type="transmembrane region" description="Helical" evidence="1">
    <location>
        <begin position="370"/>
        <end position="390"/>
    </location>
</feature>
<feature type="transmembrane region" description="Helical" evidence="1">
    <location>
        <begin position="401"/>
        <end position="421"/>
    </location>
</feature>
<feature type="region of interest" description="Disordered" evidence="2">
    <location>
        <begin position="1"/>
        <end position="40"/>
    </location>
</feature>
<feature type="compositionally biased region" description="Polar residues" evidence="2">
    <location>
        <begin position="1"/>
        <end position="10"/>
    </location>
</feature>
<feature type="compositionally biased region" description="Polar residues" evidence="2">
    <location>
        <begin position="25"/>
        <end position="40"/>
    </location>
</feature>
<dbReference type="EMBL" id="MH898872">
    <property type="protein sequence ID" value="QBG38876.1"/>
    <property type="molecule type" value="Genomic_DNA"/>
</dbReference>
<dbReference type="SMR" id="A0A411PQP0"/>
<dbReference type="GO" id="GO:0005886">
    <property type="term" value="C:plasma membrane"/>
    <property type="evidence" value="ECO:0007669"/>
    <property type="project" value="UniProtKB-SubCell"/>
</dbReference>
<dbReference type="GO" id="GO:0022857">
    <property type="term" value="F:transmembrane transporter activity"/>
    <property type="evidence" value="ECO:0007669"/>
    <property type="project" value="InterPro"/>
</dbReference>
<dbReference type="CDD" id="cd17352">
    <property type="entry name" value="MFS_MCT_SLC16"/>
    <property type="match status" value="1"/>
</dbReference>
<dbReference type="Gene3D" id="1.20.1250.20">
    <property type="entry name" value="MFS general substrate transporter like domains"/>
    <property type="match status" value="2"/>
</dbReference>
<dbReference type="InterPro" id="IPR011701">
    <property type="entry name" value="MFS"/>
</dbReference>
<dbReference type="InterPro" id="IPR020846">
    <property type="entry name" value="MFS_dom"/>
</dbReference>
<dbReference type="InterPro" id="IPR036259">
    <property type="entry name" value="MFS_trans_sf"/>
</dbReference>
<dbReference type="InterPro" id="IPR050327">
    <property type="entry name" value="Proton-linked_MCT"/>
</dbReference>
<dbReference type="PANTHER" id="PTHR11360:SF250">
    <property type="entry name" value="MFS-TYPE TRANSPORTER AFUA_1G00970"/>
    <property type="match status" value="1"/>
</dbReference>
<dbReference type="PANTHER" id="PTHR11360">
    <property type="entry name" value="MONOCARBOXYLATE TRANSPORTER"/>
    <property type="match status" value="1"/>
</dbReference>
<dbReference type="Pfam" id="PF07690">
    <property type="entry name" value="MFS_1"/>
    <property type="match status" value="1"/>
</dbReference>
<dbReference type="SUPFAM" id="SSF103473">
    <property type="entry name" value="MFS general substrate transporter"/>
    <property type="match status" value="1"/>
</dbReference>
<dbReference type="PROSITE" id="PS50850">
    <property type="entry name" value="MFS"/>
    <property type="match status" value="1"/>
</dbReference>
<sequence>MSRSTSTELQQELPASKEVPPDPTSIASSETASGSKPPSTEFTPRAILVLVGSFLVTFCSVGFTNAFGVFQTYYQEAFLSDKSSSDISWIGSFNIFCMFGCTFISGYLTDRYGPRLLICFGSLVMVFALFMLSLSTEYYQIFLTQAFLFGVGISFVLLPAMATVSLYFAKSRSLAMGIIVSGSSLGGVIWPIALDRLFNEVSFGWTVRIAAFIMLPLLGLACLAIRRPAEFANRPKPKADFSCVKNPVMIFLAIGLFLIFLGLFSPFFYVTSYMISLGKDSNLAFYMVSVVNASSLFGRILPGLIADRVGNYNVLFMVAVFSGLVACCWTKATSVGGIVVFSLAYGLASGAVISLQGPCAAQTVQREQFGVAMGVVMTFLSIAGLVGTPINGQILIPYGYLGLSLFSGLVMLLGSVFILLARLKIKTGLLVKA</sequence>
<name>AGN12_PAEDI</name>
<accession>A0A411PQP0</accession>
<gene>
    <name evidence="4" type="primary">AgnL12</name>
</gene>
<keyword id="KW-1003">Cell membrane</keyword>
<keyword id="KW-0472">Membrane</keyword>
<keyword id="KW-0812">Transmembrane</keyword>
<keyword id="KW-1133">Transmembrane helix</keyword>
<keyword id="KW-0813">Transport</keyword>